<evidence type="ECO:0000255" key="1">
    <source>
        <dbReference type="HAMAP-Rule" id="MF_01037"/>
    </source>
</evidence>
<keyword id="KW-0963">Cytoplasm</keyword>
<keyword id="KW-0274">FAD</keyword>
<keyword id="KW-0285">Flavoprotein</keyword>
<keyword id="KW-0489">Methyltransferase</keyword>
<keyword id="KW-0520">NAD</keyword>
<keyword id="KW-0521">NADP</keyword>
<keyword id="KW-1185">Reference proteome</keyword>
<keyword id="KW-0808">Transferase</keyword>
<keyword id="KW-0819">tRNA processing</keyword>
<comment type="function">
    <text evidence="1">Catalyzes the folate-dependent formation of 5-methyl-uridine at position 54 (M-5-U54) in all tRNAs.</text>
</comment>
<comment type="catalytic activity">
    <reaction evidence="1">
        <text>uridine(54) in tRNA + (6R)-5,10-methylene-5,6,7,8-tetrahydrofolate + NADH + H(+) = 5-methyluridine(54) in tRNA + (6S)-5,6,7,8-tetrahydrofolate + NAD(+)</text>
        <dbReference type="Rhea" id="RHEA:16873"/>
        <dbReference type="Rhea" id="RHEA-COMP:10167"/>
        <dbReference type="Rhea" id="RHEA-COMP:10193"/>
        <dbReference type="ChEBI" id="CHEBI:15378"/>
        <dbReference type="ChEBI" id="CHEBI:15636"/>
        <dbReference type="ChEBI" id="CHEBI:57453"/>
        <dbReference type="ChEBI" id="CHEBI:57540"/>
        <dbReference type="ChEBI" id="CHEBI:57945"/>
        <dbReference type="ChEBI" id="CHEBI:65315"/>
        <dbReference type="ChEBI" id="CHEBI:74447"/>
        <dbReference type="EC" id="2.1.1.74"/>
    </reaction>
</comment>
<comment type="catalytic activity">
    <reaction evidence="1">
        <text>uridine(54) in tRNA + (6R)-5,10-methylene-5,6,7,8-tetrahydrofolate + NADPH + H(+) = 5-methyluridine(54) in tRNA + (6S)-5,6,7,8-tetrahydrofolate + NADP(+)</text>
        <dbReference type="Rhea" id="RHEA:62372"/>
        <dbReference type="Rhea" id="RHEA-COMP:10167"/>
        <dbReference type="Rhea" id="RHEA-COMP:10193"/>
        <dbReference type="ChEBI" id="CHEBI:15378"/>
        <dbReference type="ChEBI" id="CHEBI:15636"/>
        <dbReference type="ChEBI" id="CHEBI:57453"/>
        <dbReference type="ChEBI" id="CHEBI:57783"/>
        <dbReference type="ChEBI" id="CHEBI:58349"/>
        <dbReference type="ChEBI" id="CHEBI:65315"/>
        <dbReference type="ChEBI" id="CHEBI:74447"/>
        <dbReference type="EC" id="2.1.1.74"/>
    </reaction>
</comment>
<comment type="cofactor">
    <cofactor evidence="1">
        <name>FAD</name>
        <dbReference type="ChEBI" id="CHEBI:57692"/>
    </cofactor>
</comment>
<comment type="subcellular location">
    <subcellularLocation>
        <location evidence="1">Cytoplasm</location>
    </subcellularLocation>
</comment>
<comment type="similarity">
    <text evidence="1">Belongs to the MnmG family. TrmFO subfamily.</text>
</comment>
<sequence length="429" mass="49015">MRVNIVGAGLAGVEVAYKLLREGFKVRIFEQKPVKFSPVHKMETFGELVCSNSLKSESLKNAEGILKEEMKLLDSLVLNCAYKTRVPAGKALAVDREKFSQCITKVLESFENIEIVRKEVEKIDLDTNEIWVVATGPTTDGKFAQWLSKLTGGFLNFFDAVAPIISRDSIDFNKCFVGDRYGVGTGDYINCPMTKEEYERFYRELVNAEMIEMKDFDRKLLFERCQPIEEIAKSGEKSLLFGPLRPVGLVNPHTGEIPYAVIQLRKEDEEGNMYNIVGFQTRLKWSEQKRIIRLIPGLENAEILRYGVMHRNTYIDTPRVLDEFLRHKKYKNIFFAGQITGVEGYLESAACGIYVGLNISRILSGKEPVKLPPKTMMGALINYITKADELKPMYANFGLINVKMKKNEKREKLHEICINEMKNFLNMLK</sequence>
<organism>
    <name type="scientific">Thermosipho africanus (strain TCF52B)</name>
    <dbReference type="NCBI Taxonomy" id="484019"/>
    <lineage>
        <taxon>Bacteria</taxon>
        <taxon>Thermotogati</taxon>
        <taxon>Thermotogota</taxon>
        <taxon>Thermotogae</taxon>
        <taxon>Thermotogales</taxon>
        <taxon>Fervidobacteriaceae</taxon>
        <taxon>Thermosipho</taxon>
    </lineage>
</organism>
<protein>
    <recommendedName>
        <fullName evidence="1">Methylenetetrahydrofolate--tRNA-(uracil-5-)-methyltransferase TrmFO</fullName>
        <ecNumber evidence="1">2.1.1.74</ecNumber>
    </recommendedName>
    <alternativeName>
        <fullName evidence="1">Folate-dependent tRNA (uracil-5-)-methyltransferase</fullName>
    </alternativeName>
    <alternativeName>
        <fullName evidence="1">Folate-dependent tRNA(M-5-U54)-methyltransferase</fullName>
    </alternativeName>
</protein>
<proteinExistence type="inferred from homology"/>
<feature type="chain" id="PRO_1000135892" description="Methylenetetrahydrofolate--tRNA-(uracil-5-)-methyltransferase TrmFO">
    <location>
        <begin position="1"/>
        <end position="429"/>
    </location>
</feature>
<feature type="binding site" evidence="1">
    <location>
        <begin position="7"/>
        <end position="12"/>
    </location>
    <ligand>
        <name>FAD</name>
        <dbReference type="ChEBI" id="CHEBI:57692"/>
    </ligand>
</feature>
<gene>
    <name evidence="1" type="primary">trmFO</name>
    <name type="ordered locus">THA_469</name>
</gene>
<accession>B7IFU6</accession>
<reference key="1">
    <citation type="journal article" date="2009" name="J. Bacteriol.">
        <title>The genome of Thermosipho africanus TCF52B: lateral genetic connections to the Firmicutes and Archaea.</title>
        <authorList>
            <person name="Nesboe C.L."/>
            <person name="Bapteste E."/>
            <person name="Curtis B."/>
            <person name="Dahle H."/>
            <person name="Lopez P."/>
            <person name="Macleod D."/>
            <person name="Dlutek M."/>
            <person name="Bowman S."/>
            <person name="Zhaxybayeva O."/>
            <person name="Birkeland N.-K."/>
            <person name="Doolittle W.F."/>
        </authorList>
    </citation>
    <scope>NUCLEOTIDE SEQUENCE [LARGE SCALE GENOMIC DNA]</scope>
    <source>
        <strain>TCF52B</strain>
    </source>
</reference>
<dbReference type="EC" id="2.1.1.74" evidence="1"/>
<dbReference type="EMBL" id="CP001185">
    <property type="protein sequence ID" value="ACJ74960.1"/>
    <property type="molecule type" value="Genomic_DNA"/>
</dbReference>
<dbReference type="RefSeq" id="WP_012579598.1">
    <property type="nucleotide sequence ID" value="NC_011653.1"/>
</dbReference>
<dbReference type="SMR" id="B7IFU6"/>
<dbReference type="STRING" id="484019.THA_469"/>
<dbReference type="KEGG" id="taf:THA_469"/>
<dbReference type="eggNOG" id="COG1206">
    <property type="taxonomic scope" value="Bacteria"/>
</dbReference>
<dbReference type="HOGENOM" id="CLU_033057_1_0_0"/>
<dbReference type="OrthoDB" id="9803114at2"/>
<dbReference type="Proteomes" id="UP000002453">
    <property type="component" value="Chromosome"/>
</dbReference>
<dbReference type="GO" id="GO:0005829">
    <property type="term" value="C:cytosol"/>
    <property type="evidence" value="ECO:0007669"/>
    <property type="project" value="TreeGrafter"/>
</dbReference>
<dbReference type="GO" id="GO:0050660">
    <property type="term" value="F:flavin adenine dinucleotide binding"/>
    <property type="evidence" value="ECO:0007669"/>
    <property type="project" value="UniProtKB-UniRule"/>
</dbReference>
<dbReference type="GO" id="GO:0047151">
    <property type="term" value="F:tRNA (uracil(54)-C5)-methyltransferase activity, 5,10-methylenetetrahydrofolate-dependent"/>
    <property type="evidence" value="ECO:0007669"/>
    <property type="project" value="UniProtKB-UniRule"/>
</dbReference>
<dbReference type="GO" id="GO:0030488">
    <property type="term" value="P:tRNA methylation"/>
    <property type="evidence" value="ECO:0007669"/>
    <property type="project" value="TreeGrafter"/>
</dbReference>
<dbReference type="GO" id="GO:0002098">
    <property type="term" value="P:tRNA wobble uridine modification"/>
    <property type="evidence" value="ECO:0007669"/>
    <property type="project" value="TreeGrafter"/>
</dbReference>
<dbReference type="Gene3D" id="3.50.50.60">
    <property type="entry name" value="FAD/NAD(P)-binding domain"/>
    <property type="match status" value="2"/>
</dbReference>
<dbReference type="HAMAP" id="MF_01037">
    <property type="entry name" value="TrmFO"/>
    <property type="match status" value="1"/>
</dbReference>
<dbReference type="InterPro" id="IPR036188">
    <property type="entry name" value="FAD/NAD-bd_sf"/>
</dbReference>
<dbReference type="InterPro" id="IPR002218">
    <property type="entry name" value="MnmG-rel"/>
</dbReference>
<dbReference type="InterPro" id="IPR040131">
    <property type="entry name" value="MnmG_N"/>
</dbReference>
<dbReference type="InterPro" id="IPR004417">
    <property type="entry name" value="TrmFO"/>
</dbReference>
<dbReference type="NCBIfam" id="TIGR00137">
    <property type="entry name" value="gid_trmFO"/>
    <property type="match status" value="1"/>
</dbReference>
<dbReference type="NCBIfam" id="NF003739">
    <property type="entry name" value="PRK05335.1"/>
    <property type="match status" value="1"/>
</dbReference>
<dbReference type="PANTHER" id="PTHR11806">
    <property type="entry name" value="GLUCOSE INHIBITED DIVISION PROTEIN A"/>
    <property type="match status" value="1"/>
</dbReference>
<dbReference type="PANTHER" id="PTHR11806:SF2">
    <property type="entry name" value="METHYLENETETRAHYDROFOLATE--TRNA-(URACIL-5-)-METHYLTRANSFERASE TRMFO"/>
    <property type="match status" value="1"/>
</dbReference>
<dbReference type="Pfam" id="PF01134">
    <property type="entry name" value="GIDA"/>
    <property type="match status" value="1"/>
</dbReference>
<dbReference type="SUPFAM" id="SSF51905">
    <property type="entry name" value="FAD/NAD(P)-binding domain"/>
    <property type="match status" value="1"/>
</dbReference>
<name>TRMFO_THEAB</name>